<gene>
    <name type="primary">ITPK4</name>
    <name type="ordered locus">At2g43980</name>
    <name type="ORF">F6E13.11</name>
</gene>
<feature type="chain" id="PRO_0000220842" description="Inositol 1,3,4-trisphosphate 5/6-kinase 4">
    <location>
        <begin position="1"/>
        <end position="488"/>
    </location>
</feature>
<feature type="domain" description="ATP-grasp">
    <location>
        <begin position="246"/>
        <end position="488"/>
    </location>
</feature>
<feature type="binding site" evidence="2">
    <location>
        <position position="208"/>
    </location>
    <ligand>
        <name>1D-myo-inositol 1,3,4-trisphosphate</name>
        <dbReference type="ChEBI" id="CHEBI:58414"/>
    </ligand>
</feature>
<feature type="binding site" evidence="2">
    <location>
        <position position="224"/>
    </location>
    <ligand>
        <name>1D-myo-inositol 1,3,4-trisphosphate</name>
        <dbReference type="ChEBI" id="CHEBI:58414"/>
    </ligand>
</feature>
<feature type="binding site" evidence="1">
    <location>
        <position position="263"/>
    </location>
    <ligand>
        <name>ATP</name>
        <dbReference type="ChEBI" id="CHEBI:30616"/>
    </ligand>
</feature>
<feature type="binding site" evidence="1">
    <location>
        <position position="315"/>
    </location>
    <ligand>
        <name>ATP</name>
        <dbReference type="ChEBI" id="CHEBI:30616"/>
    </ligand>
</feature>
<feature type="binding site" evidence="2">
    <location>
        <position position="326"/>
    </location>
    <ligand>
        <name>1D-myo-inositol 1,3,4-trisphosphate</name>
        <dbReference type="ChEBI" id="CHEBI:58414"/>
    </ligand>
</feature>
<feature type="binding site" evidence="1">
    <location>
        <begin position="349"/>
        <end position="360"/>
    </location>
    <ligand>
        <name>ATP</name>
        <dbReference type="ChEBI" id="CHEBI:30616"/>
    </ligand>
</feature>
<feature type="binding site" evidence="2">
    <location>
        <position position="360"/>
    </location>
    <ligand>
        <name>1D-myo-inositol 1,3,4-trisphosphate</name>
        <dbReference type="ChEBI" id="CHEBI:58414"/>
    </ligand>
</feature>
<feature type="binding site" evidence="1">
    <location>
        <position position="375"/>
    </location>
    <ligand>
        <name>ATP</name>
        <dbReference type="ChEBI" id="CHEBI:30616"/>
    </ligand>
</feature>
<feature type="binding site" evidence="1">
    <location>
        <position position="398"/>
    </location>
    <ligand>
        <name>ATP</name>
        <dbReference type="ChEBI" id="CHEBI:30616"/>
    </ligand>
</feature>
<feature type="binding site" evidence="1">
    <location>
        <position position="439"/>
    </location>
    <ligand>
        <name>Mg(2+)</name>
        <dbReference type="ChEBI" id="CHEBI:18420"/>
        <label>1</label>
    </ligand>
</feature>
<feature type="binding site" evidence="1">
    <location>
        <position position="453"/>
    </location>
    <ligand>
        <name>Mg(2+)</name>
        <dbReference type="ChEBI" id="CHEBI:18420"/>
        <label>1</label>
    </ligand>
</feature>
<feature type="binding site" evidence="1">
    <location>
        <position position="453"/>
    </location>
    <ligand>
        <name>Mg(2+)</name>
        <dbReference type="ChEBI" id="CHEBI:18420"/>
        <label>2</label>
    </ligand>
</feature>
<feature type="binding site" evidence="2">
    <location>
        <position position="455"/>
    </location>
    <ligand>
        <name>1D-myo-inositol 1,3,4-trisphosphate</name>
        <dbReference type="ChEBI" id="CHEBI:58414"/>
    </ligand>
</feature>
<feature type="binding site" evidence="1">
    <location>
        <position position="455"/>
    </location>
    <ligand>
        <name>Mg(2+)</name>
        <dbReference type="ChEBI" id="CHEBI:18420"/>
        <label>2</label>
    </ligand>
</feature>
<feature type="binding site" evidence="2">
    <location>
        <position position="459"/>
    </location>
    <ligand>
        <name>1D-myo-inositol 1,3,4-trisphosphate</name>
        <dbReference type="ChEBI" id="CHEBI:58414"/>
    </ligand>
</feature>
<feature type="strand" evidence="6">
    <location>
        <begin position="1"/>
        <end position="7"/>
    </location>
</feature>
<feature type="helix" evidence="6">
    <location>
        <begin position="8"/>
        <end position="10"/>
    </location>
</feature>
<feature type="helix" evidence="6">
    <location>
        <begin position="27"/>
        <end position="37"/>
    </location>
</feature>
<feature type="strand" evidence="6">
    <location>
        <begin position="38"/>
        <end position="45"/>
    </location>
</feature>
<feature type="strand" evidence="6">
    <location>
        <begin position="47"/>
        <end position="49"/>
    </location>
</feature>
<feature type="helix" evidence="6">
    <location>
        <begin position="51"/>
        <end position="63"/>
    </location>
</feature>
<feature type="strand" evidence="6">
    <location>
        <begin position="67"/>
        <end position="70"/>
    </location>
</feature>
<feature type="helix" evidence="6">
    <location>
        <begin position="77"/>
        <end position="87"/>
    </location>
</feature>
<feature type="strand" evidence="6">
    <location>
        <begin position="90"/>
        <end position="97"/>
    </location>
</feature>
<feature type="helix" evidence="6">
    <location>
        <begin position="102"/>
        <end position="106"/>
    </location>
</feature>
<feature type="strand" evidence="6">
    <location>
        <begin position="114"/>
        <end position="116"/>
    </location>
</feature>
<feature type="strand" evidence="6">
    <location>
        <begin position="129"/>
        <end position="131"/>
    </location>
</feature>
<feature type="helix" evidence="6">
    <location>
        <begin position="135"/>
        <end position="137"/>
    </location>
</feature>
<feature type="helix" evidence="6">
    <location>
        <begin position="138"/>
        <end position="149"/>
    </location>
</feature>
<feature type="strand" evidence="6">
    <location>
        <begin position="155"/>
        <end position="160"/>
    </location>
</feature>
<feature type="helix" evidence="6">
    <location>
        <begin position="163"/>
        <end position="171"/>
    </location>
</feature>
<feature type="strand" evidence="6">
    <location>
        <begin position="184"/>
        <end position="188"/>
    </location>
</feature>
<feature type="helix" evidence="6">
    <location>
        <begin position="195"/>
        <end position="199"/>
    </location>
</feature>
<feature type="strand" evidence="6">
    <location>
        <begin position="203"/>
        <end position="207"/>
    </location>
</feature>
<feature type="helix" evidence="6">
    <location>
        <begin position="209"/>
        <end position="212"/>
    </location>
</feature>
<feature type="strand" evidence="6">
    <location>
        <begin position="213"/>
        <end position="218"/>
    </location>
</feature>
<feature type="strand" evidence="6">
    <location>
        <begin position="220"/>
        <end position="222"/>
    </location>
</feature>
<feature type="strand" evidence="6">
    <location>
        <begin position="227"/>
        <end position="231"/>
    </location>
</feature>
<feature type="helix" evidence="6">
    <location>
        <begin position="233"/>
        <end position="243"/>
    </location>
</feature>
<feature type="strand" evidence="6">
    <location>
        <begin position="246"/>
        <end position="252"/>
    </location>
</feature>
<feature type="helix" evidence="6">
    <location>
        <begin position="254"/>
        <end position="257"/>
    </location>
</feature>
<feature type="helix" evidence="6">
    <location>
        <begin position="258"/>
        <end position="261"/>
    </location>
</feature>
<feature type="helix" evidence="6">
    <location>
        <begin position="263"/>
        <end position="269"/>
    </location>
</feature>
<feature type="turn" evidence="6">
    <location>
        <begin position="270"/>
        <end position="272"/>
    </location>
</feature>
<feature type="helix" evidence="6">
    <location>
        <begin position="273"/>
        <end position="275"/>
    </location>
</feature>
<feature type="strand" evidence="6">
    <location>
        <begin position="283"/>
        <end position="285"/>
    </location>
</feature>
<feature type="strand" evidence="6">
    <location>
        <begin position="288"/>
        <end position="292"/>
    </location>
</feature>
<feature type="helix" evidence="6">
    <location>
        <begin position="299"/>
        <end position="305"/>
    </location>
</feature>
<feature type="strand" evidence="6">
    <location>
        <begin position="310"/>
        <end position="318"/>
    </location>
</feature>
<feature type="strand" evidence="6">
    <location>
        <begin position="320"/>
        <end position="322"/>
    </location>
</feature>
<feature type="turn" evidence="6">
    <location>
        <begin position="323"/>
        <end position="326"/>
    </location>
</feature>
<feature type="strand" evidence="6">
    <location>
        <begin position="327"/>
        <end position="331"/>
    </location>
</feature>
<feature type="helix" evidence="6">
    <location>
        <begin position="334"/>
        <end position="339"/>
    </location>
</feature>
<feature type="strand" evidence="6">
    <location>
        <begin position="344"/>
        <end position="350"/>
    </location>
</feature>
<feature type="strand" evidence="6">
    <location>
        <begin position="357"/>
        <end position="364"/>
    </location>
</feature>
<feature type="strand" evidence="6">
    <location>
        <begin position="367"/>
        <end position="374"/>
    </location>
</feature>
<feature type="helix" evidence="6">
    <location>
        <begin position="379"/>
        <end position="386"/>
    </location>
</feature>
<feature type="helix" evidence="6">
    <location>
        <begin position="387"/>
        <end position="389"/>
    </location>
</feature>
<feature type="strand" evidence="6">
    <location>
        <begin position="394"/>
        <end position="397"/>
    </location>
</feature>
<feature type="turn" evidence="6">
    <location>
        <begin position="398"/>
        <end position="400"/>
    </location>
</feature>
<feature type="helix" evidence="6">
    <location>
        <begin position="417"/>
        <end position="431"/>
    </location>
</feature>
<feature type="strand" evidence="6">
    <location>
        <begin position="434"/>
        <end position="442"/>
    </location>
</feature>
<feature type="turn" evidence="6">
    <location>
        <begin position="444"/>
        <end position="446"/>
    </location>
</feature>
<feature type="strand" evidence="6">
    <location>
        <begin position="449"/>
        <end position="457"/>
    </location>
</feature>
<feature type="helix" evidence="6">
    <location>
        <begin position="465"/>
        <end position="483"/>
    </location>
</feature>
<organism>
    <name type="scientific">Arabidopsis thaliana</name>
    <name type="common">Mouse-ear cress</name>
    <dbReference type="NCBI Taxonomy" id="3702"/>
    <lineage>
        <taxon>Eukaryota</taxon>
        <taxon>Viridiplantae</taxon>
        <taxon>Streptophyta</taxon>
        <taxon>Embryophyta</taxon>
        <taxon>Tracheophyta</taxon>
        <taxon>Spermatophyta</taxon>
        <taxon>Magnoliopsida</taxon>
        <taxon>eudicotyledons</taxon>
        <taxon>Gunneridae</taxon>
        <taxon>Pentapetalae</taxon>
        <taxon>rosids</taxon>
        <taxon>malvids</taxon>
        <taxon>Brassicales</taxon>
        <taxon>Brassicaceae</taxon>
        <taxon>Camelineae</taxon>
        <taxon>Arabidopsis</taxon>
    </lineage>
</organism>
<protein>
    <recommendedName>
        <fullName>Inositol 1,3,4-trisphosphate 5/6-kinase 4</fullName>
        <shortName>AtItpk-4</shortName>
        <shortName>Inositol-triphosphate 5/6-kinase 4</shortName>
        <shortName>Ins(1,3,4)P(3) 5/6-kinase 4</shortName>
        <ecNumber evidence="3">2.7.1.159</ecNumber>
    </recommendedName>
    <alternativeName>
        <fullName>Inositol-tetrakisphosphate 1-kinase 4</fullName>
    </alternativeName>
</protein>
<keyword id="KW-0002">3D-structure</keyword>
<keyword id="KW-0067">ATP-binding</keyword>
<keyword id="KW-0418">Kinase</keyword>
<keyword id="KW-0460">Magnesium</keyword>
<keyword id="KW-0479">Metal-binding</keyword>
<keyword id="KW-0547">Nucleotide-binding</keyword>
<keyword id="KW-1185">Reference proteome</keyword>
<keyword id="KW-0808">Transferase</keyword>
<proteinExistence type="evidence at protein level"/>
<sequence>MKGVLLDESVLFSPESEDSSPSLRESVPSLLRLLRYSMIRTGISYGLDLPENKVDLLRKTAAEYSINCLPLETSLTSVTFGDTLKAWYSDGSILYVASSRKEEILRELSPSQLVVLLDVEGDSLEDPNIIHIHSLEELPMTICCINKKAMGDGAAIVAYIMKPSRVEDFAKRGALPMYPTSCGLIFLPLMFEFPLASQLKHADIIFHKATDEILSIELNCSDSKSSVAVTFSTGMEKLKKYMEDQNACAIVDPIRNIYPVVDRLKMQHILLGLEGLGAAGRKIRGACFLKIDSYDEPDLAQNLSRAGLSLPCIVKPQVACGVADAHSMAIVFRVEDFKNLNTPVPAIIQEYVDHSSRIFKFYVLGETIFHAVKKSIPSSSSLRKSAEENGLKPILFDSLKSLPVDSANQNPVSEIDLELVTEAATWLRKKLDLTIFGFDVVIQEGTGDHVIVDLNYLPSFKEVPDNIAVPAFWEAIRNRFDQHVQEKH</sequence>
<comment type="function">
    <text evidence="1 3">Kinase that can phosphorylate the inositol polyphosphate Ins(1,3,4)P3 to form InsP4. Also phosphorylates a racemic mixture of Ins(1,4,6)P3 and Ins(3,4,6)P3 to form InsP4. Does not display inositol 3,4,5,6-tetrakisphosphate 1-kinase activity, but possesses inositol 1,4,5,6-tetrakisphosphate and inositol 1,3,4,5-tetrakisphosphate isomerase activity (PubMed:17698066). Ins(1,3,4,6)P4 is an essential molecule in the hexakisphosphate (InsP6) pathway (By similarity).</text>
</comment>
<comment type="catalytic activity">
    <reaction evidence="3">
        <text>1D-myo-inositol 1,3,4-trisphosphate + ATP = 1D-myo-inositol 1,3,4,5-tetrakisphosphate + ADP + H(+)</text>
        <dbReference type="Rhea" id="RHEA:13253"/>
        <dbReference type="ChEBI" id="CHEBI:15378"/>
        <dbReference type="ChEBI" id="CHEBI:30616"/>
        <dbReference type="ChEBI" id="CHEBI:57895"/>
        <dbReference type="ChEBI" id="CHEBI:58414"/>
        <dbReference type="ChEBI" id="CHEBI:456216"/>
        <dbReference type="EC" id="2.7.1.159"/>
    </reaction>
</comment>
<comment type="catalytic activity">
    <reaction evidence="3">
        <text>1D-myo-inositol 1,3,4-trisphosphate + ATP = 1D-myo-inositol 1,3,4,6-tetrakisphosphate + ADP + H(+)</text>
        <dbReference type="Rhea" id="RHEA:20940"/>
        <dbReference type="ChEBI" id="CHEBI:15378"/>
        <dbReference type="ChEBI" id="CHEBI:30616"/>
        <dbReference type="ChEBI" id="CHEBI:57660"/>
        <dbReference type="ChEBI" id="CHEBI:58414"/>
        <dbReference type="ChEBI" id="CHEBI:456216"/>
        <dbReference type="EC" id="2.7.1.159"/>
    </reaction>
</comment>
<comment type="cofactor">
    <cofactor evidence="1">
        <name>Mg(2+)</name>
        <dbReference type="ChEBI" id="CHEBI:18420"/>
    </cofactor>
    <text evidence="1">Binds 2 magnesium ions per subunit.</text>
</comment>
<comment type="subunit">
    <text evidence="1">Monomer.</text>
</comment>
<comment type="tissue specificity">
    <text evidence="3">Expressed in roots, leaf vasculature, cauline leaves, flower buds and siliques.</text>
</comment>
<comment type="disruption phenotype">
    <text evidence="4">Low inositol hexakisphosphate (phytate) levels in seed tissue.</text>
</comment>
<comment type="similarity">
    <text evidence="5">Belongs to the ITPK1 family.</text>
</comment>
<comment type="sequence caution" evidence="5">
    <conflict type="erroneous gene model prediction">
        <sequence resource="EMBL-CDS" id="AAC23406"/>
    </conflict>
</comment>
<dbReference type="EC" id="2.7.1.159" evidence="3"/>
<dbReference type="EMBL" id="AC004005">
    <property type="protein sequence ID" value="AAC23406.1"/>
    <property type="status" value="ALT_SEQ"/>
    <property type="molecule type" value="Genomic_DNA"/>
</dbReference>
<dbReference type="EMBL" id="CP002685">
    <property type="protein sequence ID" value="AEC10358.1"/>
    <property type="molecule type" value="Genomic_DNA"/>
</dbReference>
<dbReference type="EMBL" id="AY070449">
    <property type="protein sequence ID" value="AAL49852.1"/>
    <property type="molecule type" value="mRNA"/>
</dbReference>
<dbReference type="EMBL" id="AY096566">
    <property type="protein sequence ID" value="AAM20216.1"/>
    <property type="molecule type" value="mRNA"/>
</dbReference>
<dbReference type="PIR" id="T00678">
    <property type="entry name" value="T00678"/>
</dbReference>
<dbReference type="RefSeq" id="NP_850407.1">
    <property type="nucleotide sequence ID" value="NM_180076.2"/>
</dbReference>
<dbReference type="PDB" id="7PUP">
    <property type="method" value="X-ray"/>
    <property type="resolution" value="1.91 A"/>
    <property type="chains" value="A=1-488"/>
</dbReference>
<dbReference type="PDBsum" id="7PUP"/>
<dbReference type="SMR" id="O80568"/>
<dbReference type="BioGRID" id="4339">
    <property type="interactions" value="1"/>
</dbReference>
<dbReference type="FunCoup" id="O80568">
    <property type="interactions" value="1708"/>
</dbReference>
<dbReference type="STRING" id="3702.O80568"/>
<dbReference type="PaxDb" id="3702-AT2G43980.1"/>
<dbReference type="ProteomicsDB" id="238960"/>
<dbReference type="EnsemblPlants" id="AT2G43980.1">
    <property type="protein sequence ID" value="AT2G43980.1"/>
    <property type="gene ID" value="AT2G43980"/>
</dbReference>
<dbReference type="GeneID" id="819003"/>
<dbReference type="Gramene" id="AT2G43980.1">
    <property type="protein sequence ID" value="AT2G43980.1"/>
    <property type="gene ID" value="AT2G43980"/>
</dbReference>
<dbReference type="KEGG" id="ath:AT2G43980"/>
<dbReference type="Araport" id="AT2G43980"/>
<dbReference type="TAIR" id="AT2G43980">
    <property type="gene designation" value="ITPK4"/>
</dbReference>
<dbReference type="eggNOG" id="ENOG502QQ6B">
    <property type="taxonomic scope" value="Eukaryota"/>
</dbReference>
<dbReference type="HOGENOM" id="CLU_041857_2_0_1"/>
<dbReference type="InParanoid" id="O80568"/>
<dbReference type="OMA" id="KMAIVFR"/>
<dbReference type="PhylomeDB" id="O80568"/>
<dbReference type="BioCyc" id="ARA:AT2G43980-MONOMER"/>
<dbReference type="BRENDA" id="2.7.1.159">
    <property type="organism ID" value="399"/>
</dbReference>
<dbReference type="PRO" id="PR:O80568"/>
<dbReference type="Proteomes" id="UP000006548">
    <property type="component" value="Chromosome 2"/>
</dbReference>
<dbReference type="ExpressionAtlas" id="O80568">
    <property type="expression patterns" value="baseline and differential"/>
</dbReference>
<dbReference type="GO" id="GO:0005524">
    <property type="term" value="F:ATP binding"/>
    <property type="evidence" value="ECO:0007669"/>
    <property type="project" value="UniProtKB-KW"/>
</dbReference>
<dbReference type="GO" id="GO:0052726">
    <property type="term" value="F:inositol-1,3,4-trisphosphate 5-kinase activity"/>
    <property type="evidence" value="ECO:0000314"/>
    <property type="project" value="UniProtKB"/>
</dbReference>
<dbReference type="GO" id="GO:0052725">
    <property type="term" value="F:inositol-1,3,4-trisphosphate 6-kinase activity"/>
    <property type="evidence" value="ECO:0000314"/>
    <property type="project" value="UniProtKB"/>
</dbReference>
<dbReference type="GO" id="GO:0047325">
    <property type="term" value="F:inositol-3,4,5,6-tetrakisphosphate 1-kinase activity"/>
    <property type="evidence" value="ECO:0000314"/>
    <property type="project" value="UniProtKB"/>
</dbReference>
<dbReference type="GO" id="GO:0000287">
    <property type="term" value="F:magnesium ion binding"/>
    <property type="evidence" value="ECO:0007669"/>
    <property type="project" value="InterPro"/>
</dbReference>
<dbReference type="GO" id="GO:0032957">
    <property type="term" value="P:inositol trisphosphate metabolic process"/>
    <property type="evidence" value="ECO:0007669"/>
    <property type="project" value="InterPro"/>
</dbReference>
<dbReference type="GO" id="GO:0010264">
    <property type="term" value="P:myo-inositol hexakisphosphate biosynthetic process"/>
    <property type="evidence" value="ECO:0000315"/>
    <property type="project" value="TAIR"/>
</dbReference>
<dbReference type="FunFam" id="3.30.470.20:FF:000047">
    <property type="entry name" value="Inositol-tetrakisphosphate 1-kinase 4"/>
    <property type="match status" value="1"/>
</dbReference>
<dbReference type="Gene3D" id="3.30.470.20">
    <property type="entry name" value="ATP-grasp fold, B domain"/>
    <property type="match status" value="1"/>
</dbReference>
<dbReference type="InterPro" id="IPR008656">
    <property type="entry name" value="Inositol_tetrakis-P_1-kinase"/>
</dbReference>
<dbReference type="InterPro" id="IPR040464">
    <property type="entry name" value="InsP(3)kin_ATP-grasp"/>
</dbReference>
<dbReference type="PANTHER" id="PTHR14217">
    <property type="entry name" value="INOSITOL-TETRAKISPHOSPHATE 1-KINASE"/>
    <property type="match status" value="1"/>
</dbReference>
<dbReference type="PANTHER" id="PTHR14217:SF1">
    <property type="entry name" value="INOSITOL-TETRAKISPHOSPHATE 1-KINASE"/>
    <property type="match status" value="1"/>
</dbReference>
<dbReference type="Pfam" id="PF05770">
    <property type="entry name" value="Ins134_P3_kin"/>
    <property type="match status" value="1"/>
</dbReference>
<dbReference type="PIRSF" id="PIRSF038163">
    <property type="entry name" value="ITPK_uncN"/>
    <property type="match status" value="1"/>
</dbReference>
<dbReference type="SUPFAM" id="SSF56059">
    <property type="entry name" value="Glutathione synthetase ATP-binding domain-like"/>
    <property type="match status" value="1"/>
</dbReference>
<evidence type="ECO:0000250" key="1">
    <source>
        <dbReference type="UniProtKB" id="Q13572"/>
    </source>
</evidence>
<evidence type="ECO:0000250" key="2">
    <source>
        <dbReference type="UniProtKB" id="Q9XYQ1"/>
    </source>
</evidence>
<evidence type="ECO:0000269" key="3">
    <source>
    </source>
</evidence>
<evidence type="ECO:0000269" key="4">
    <source>
    </source>
</evidence>
<evidence type="ECO:0000305" key="5"/>
<evidence type="ECO:0007829" key="6">
    <source>
        <dbReference type="PDB" id="7PUP"/>
    </source>
</evidence>
<name>ITPK4_ARATH</name>
<reference key="1">
    <citation type="journal article" date="1999" name="Nature">
        <title>Sequence and analysis of chromosome 2 of the plant Arabidopsis thaliana.</title>
        <authorList>
            <person name="Lin X."/>
            <person name="Kaul S."/>
            <person name="Rounsley S.D."/>
            <person name="Shea T.P."/>
            <person name="Benito M.-I."/>
            <person name="Town C.D."/>
            <person name="Fujii C.Y."/>
            <person name="Mason T.M."/>
            <person name="Bowman C.L."/>
            <person name="Barnstead M.E."/>
            <person name="Feldblyum T.V."/>
            <person name="Buell C.R."/>
            <person name="Ketchum K.A."/>
            <person name="Lee J.J."/>
            <person name="Ronning C.M."/>
            <person name="Koo H.L."/>
            <person name="Moffat K.S."/>
            <person name="Cronin L.A."/>
            <person name="Shen M."/>
            <person name="Pai G."/>
            <person name="Van Aken S."/>
            <person name="Umayam L."/>
            <person name="Tallon L.J."/>
            <person name="Gill J.E."/>
            <person name="Adams M.D."/>
            <person name="Carrera A.J."/>
            <person name="Creasy T.H."/>
            <person name="Goodman H.M."/>
            <person name="Somerville C.R."/>
            <person name="Copenhaver G.P."/>
            <person name="Preuss D."/>
            <person name="Nierman W.C."/>
            <person name="White O."/>
            <person name="Eisen J.A."/>
            <person name="Salzberg S.L."/>
            <person name="Fraser C.M."/>
            <person name="Venter J.C."/>
        </authorList>
    </citation>
    <scope>NUCLEOTIDE SEQUENCE [LARGE SCALE GENOMIC DNA]</scope>
    <source>
        <strain>cv. Columbia</strain>
    </source>
</reference>
<reference key="2">
    <citation type="journal article" date="2017" name="Plant J.">
        <title>Araport11: a complete reannotation of the Arabidopsis thaliana reference genome.</title>
        <authorList>
            <person name="Cheng C.Y."/>
            <person name="Krishnakumar V."/>
            <person name="Chan A.P."/>
            <person name="Thibaud-Nissen F."/>
            <person name="Schobel S."/>
            <person name="Town C.D."/>
        </authorList>
    </citation>
    <scope>GENOME REANNOTATION</scope>
    <source>
        <strain>cv. Columbia</strain>
    </source>
</reference>
<reference key="3">
    <citation type="journal article" date="2003" name="Science">
        <title>Empirical analysis of transcriptional activity in the Arabidopsis genome.</title>
        <authorList>
            <person name="Yamada K."/>
            <person name="Lim J."/>
            <person name="Dale J.M."/>
            <person name="Chen H."/>
            <person name="Shinn P."/>
            <person name="Palm C.J."/>
            <person name="Southwick A.M."/>
            <person name="Wu H.C."/>
            <person name="Kim C.J."/>
            <person name="Nguyen M."/>
            <person name="Pham P.K."/>
            <person name="Cheuk R.F."/>
            <person name="Karlin-Newmann G."/>
            <person name="Liu S.X."/>
            <person name="Lam B."/>
            <person name="Sakano H."/>
            <person name="Wu T."/>
            <person name="Yu G."/>
            <person name="Miranda M."/>
            <person name="Quach H.L."/>
            <person name="Tripp M."/>
            <person name="Chang C.H."/>
            <person name="Lee J.M."/>
            <person name="Toriumi M.J."/>
            <person name="Chan M.M."/>
            <person name="Tang C.C."/>
            <person name="Onodera C.S."/>
            <person name="Deng J.M."/>
            <person name="Akiyama K."/>
            <person name="Ansari Y."/>
            <person name="Arakawa T."/>
            <person name="Banh J."/>
            <person name="Banno F."/>
            <person name="Bowser L."/>
            <person name="Brooks S.Y."/>
            <person name="Carninci P."/>
            <person name="Chao Q."/>
            <person name="Choy N."/>
            <person name="Enju A."/>
            <person name="Goldsmith A.D."/>
            <person name="Gurjal M."/>
            <person name="Hansen N.F."/>
            <person name="Hayashizaki Y."/>
            <person name="Johnson-Hopson C."/>
            <person name="Hsuan V.W."/>
            <person name="Iida K."/>
            <person name="Karnes M."/>
            <person name="Khan S."/>
            <person name="Koesema E."/>
            <person name="Ishida J."/>
            <person name="Jiang P.X."/>
            <person name="Jones T."/>
            <person name="Kawai J."/>
            <person name="Kamiya A."/>
            <person name="Meyers C."/>
            <person name="Nakajima M."/>
            <person name="Narusaka M."/>
            <person name="Seki M."/>
            <person name="Sakurai T."/>
            <person name="Satou M."/>
            <person name="Tamse R."/>
            <person name="Vaysberg M."/>
            <person name="Wallender E.K."/>
            <person name="Wong C."/>
            <person name="Yamamura Y."/>
            <person name="Yuan S."/>
            <person name="Shinozaki K."/>
            <person name="Davis R.W."/>
            <person name="Theologis A."/>
            <person name="Ecker J.R."/>
        </authorList>
    </citation>
    <scope>NUCLEOTIDE SEQUENCE [LARGE SCALE MRNA]</scope>
    <source>
        <strain>cv. Columbia</strain>
    </source>
</reference>
<reference key="4">
    <citation type="journal article" date="2007" name="FEBS Lett.">
        <title>Arabidopsis thaliana inositol 1,3,4-trisphosphate 5/6-kinase 4 (AtITPK4) is an outlier to a family of ATP-grasp fold proteins from Arabidopsis.</title>
        <authorList>
            <person name="Sweetman D."/>
            <person name="Stavridou I."/>
            <person name="Johnson S."/>
            <person name="Green P."/>
            <person name="Caddick S.E."/>
            <person name="Brearley C.A."/>
        </authorList>
    </citation>
    <scope>FUNCTION</scope>
    <scope>CATALYTIC ACTIVITY</scope>
    <scope>TISSUE SPECIFICITY</scope>
</reference>
<reference key="5">
    <citation type="journal article" date="2011" name="Mol. Genet. Genomics">
        <title>Identification of genes necessary for wild-type levels of seed phytic acid in Arabidopsis thaliana using a reverse genetics approach.</title>
        <authorList>
            <person name="Kim S.I."/>
            <person name="Tai T.H."/>
        </authorList>
    </citation>
    <scope>DISRUPTION PHENOTYPE</scope>
</reference>
<accession>O80568</accession>
<accession>Q8VYL6</accession>